<organism>
    <name type="scientific">Desulfovibrio desulfuricans (strain ATCC 27774 / DSM 6949 / MB)</name>
    <dbReference type="NCBI Taxonomy" id="525146"/>
    <lineage>
        <taxon>Bacteria</taxon>
        <taxon>Pseudomonadati</taxon>
        <taxon>Thermodesulfobacteriota</taxon>
        <taxon>Desulfovibrionia</taxon>
        <taxon>Desulfovibrionales</taxon>
        <taxon>Desulfovibrionaceae</taxon>
        <taxon>Desulfovibrio</taxon>
    </lineage>
</organism>
<dbReference type="EC" id="4.1.1.111" evidence="1"/>
<dbReference type="EMBL" id="CP001358">
    <property type="protein sequence ID" value="ACL48201.1"/>
    <property type="molecule type" value="Genomic_DNA"/>
</dbReference>
<dbReference type="PDB" id="4CZD">
    <property type="method" value="X-ray"/>
    <property type="resolution" value="2.23 A"/>
    <property type="chains" value="A/C=1-173"/>
</dbReference>
<dbReference type="PDB" id="4UN1">
    <property type="method" value="X-ray"/>
    <property type="resolution" value="1.97 A"/>
    <property type="chains" value="A/C=1-173"/>
</dbReference>
<dbReference type="PDBsum" id="4CZD"/>
<dbReference type="PDBsum" id="4UN1"/>
<dbReference type="SMR" id="B8J364"/>
<dbReference type="STRING" id="525146.Ddes_0286"/>
<dbReference type="KEGG" id="dds:Ddes_0286"/>
<dbReference type="eggNOG" id="COG1522">
    <property type="taxonomic scope" value="Bacteria"/>
</dbReference>
<dbReference type="HOGENOM" id="CLU_112007_1_0_7"/>
<dbReference type="BRENDA" id="4.1.1.111">
    <property type="organism ID" value="1905"/>
</dbReference>
<dbReference type="UniPathway" id="UPA00252"/>
<dbReference type="EvolutionaryTrace" id="B8J364"/>
<dbReference type="GO" id="GO:0016829">
    <property type="term" value="F:lyase activity"/>
    <property type="evidence" value="ECO:0007669"/>
    <property type="project" value="UniProtKB-KW"/>
</dbReference>
<dbReference type="GO" id="GO:0006783">
    <property type="term" value="P:heme biosynthetic process"/>
    <property type="evidence" value="ECO:0007669"/>
    <property type="project" value="UniProtKB-KW"/>
</dbReference>
<dbReference type="Gene3D" id="3.30.70.3460">
    <property type="match status" value="1"/>
</dbReference>
<dbReference type="Gene3D" id="1.10.10.10">
    <property type="entry name" value="Winged helix-like DNA-binding domain superfamily/Winged helix DNA-binding domain"/>
    <property type="match status" value="1"/>
</dbReference>
<dbReference type="InterPro" id="IPR040523">
    <property type="entry name" value="AsnC_trans_reg2"/>
</dbReference>
<dbReference type="InterPro" id="IPR050684">
    <property type="entry name" value="HTH-Siroheme_Decarb"/>
</dbReference>
<dbReference type="InterPro" id="IPR053953">
    <property type="entry name" value="NirdL-like_HTH"/>
</dbReference>
<dbReference type="InterPro" id="IPR036388">
    <property type="entry name" value="WH-like_DNA-bd_sf"/>
</dbReference>
<dbReference type="InterPro" id="IPR036390">
    <property type="entry name" value="WH_DNA-bd_sf"/>
</dbReference>
<dbReference type="PANTHER" id="PTHR43413:SF1">
    <property type="entry name" value="SIROHEME DECARBOXYLASE NIRL SUBUNIT"/>
    <property type="match status" value="1"/>
</dbReference>
<dbReference type="PANTHER" id="PTHR43413">
    <property type="entry name" value="TRANSCRIPTIONAL REGULATOR, ASNC FAMILY"/>
    <property type="match status" value="1"/>
</dbReference>
<dbReference type="Pfam" id="PF17805">
    <property type="entry name" value="AsnC_trans_reg2"/>
    <property type="match status" value="1"/>
</dbReference>
<dbReference type="Pfam" id="PF22451">
    <property type="entry name" value="NirdL-like_HTH"/>
    <property type="match status" value="1"/>
</dbReference>
<dbReference type="SUPFAM" id="SSF46785">
    <property type="entry name" value="Winged helix' DNA-binding domain"/>
    <property type="match status" value="1"/>
</dbReference>
<proteinExistence type="evidence at protein level"/>
<keyword id="KW-0002">3D-structure</keyword>
<keyword id="KW-0350">Heme biosynthesis</keyword>
<keyword id="KW-0456">Lyase</keyword>
<accession>B8J364</accession>
<reference key="1">
    <citation type="submission" date="2009-01" db="EMBL/GenBank/DDBJ databases">
        <title>Complete sequence of Desulfovibrio desulfuricans subsp. desulfuricans str. ATCC 27774.</title>
        <authorList>
            <consortium name="US DOE Joint Genome Institute"/>
            <person name="Lucas S."/>
            <person name="Copeland A."/>
            <person name="Lapidus A."/>
            <person name="Glavina del Rio T."/>
            <person name="Tice H."/>
            <person name="Bruce D."/>
            <person name="Goodwin L."/>
            <person name="Pitluck S."/>
            <person name="Sims D."/>
            <person name="Lu M."/>
            <person name="Kiss H."/>
            <person name="Meineke L."/>
            <person name="Brettin T."/>
            <person name="Detter J.C."/>
            <person name="Han C."/>
            <person name="Larimer F."/>
            <person name="Land M."/>
            <person name="Hauser L."/>
            <person name="Kyrpides N."/>
            <person name="Ovchinnikova G."/>
            <person name="Hazen T.C."/>
        </authorList>
    </citation>
    <scope>NUCLEOTIDE SEQUENCE [LARGE SCALE GENOMIC DNA]</scope>
    <source>
        <strain>ATCC 27774 / DSM 6949 / MB</strain>
    </source>
</reference>
<reference evidence="4 5" key="2">
    <citation type="journal article" date="2014" name="Mol. Microbiol.">
        <title>The structure, function and properties of sirohaem decarboxylase--an enzyme with structural homology to a transcription factor family that is part of the alternative haem biosynthesis pathway.</title>
        <authorList>
            <person name="Palmer D.J."/>
            <person name="Schroeder S."/>
            <person name="Lawrence A.D."/>
            <person name="Deery E."/>
            <person name="Lobo S.A."/>
            <person name="Saraiva L.M."/>
            <person name="McLean K.J."/>
            <person name="Munro A.W."/>
            <person name="Ferguson S.J."/>
            <person name="Pickersgill R.W."/>
            <person name="Brown D.G."/>
            <person name="Warren M.J."/>
        </authorList>
    </citation>
    <scope>X-RAY CRYSTALLOGRAPHY (1.97 ANGSTROMS) IN COMPLEXES WITH AHBB AND DIDECARBOXYSIROHEME</scope>
    <scope>FUNCTION</scope>
    <scope>CATALYTIC ACTIVITY</scope>
    <scope>BIOPHYSICOCHEMICAL PROPERTIES</scope>
    <scope>PATHWAY</scope>
    <scope>SUBUNIT</scope>
</reference>
<protein>
    <recommendedName>
        <fullName evidence="2">Siroheme decarboxylase alpha subunit</fullName>
        <ecNumber evidence="1">4.1.1.111</ecNumber>
    </recommendedName>
</protein>
<gene>
    <name evidence="3" type="ordered locus">Ddes_0286</name>
</gene>
<feature type="chain" id="PRO_0000450503" description="Siroheme decarboxylase alpha subunit">
    <location>
        <begin position="1"/>
        <end position="173"/>
    </location>
</feature>
<feature type="binding site" evidence="1">
    <location>
        <position position="115"/>
    </location>
    <ligand>
        <name>substrate</name>
    </ligand>
</feature>
<feature type="binding site" evidence="1">
    <location>
        <position position="119"/>
    </location>
    <ligand>
        <name>substrate</name>
    </ligand>
</feature>
<feature type="helix" evidence="7">
    <location>
        <begin position="25"/>
        <end position="37"/>
    </location>
</feature>
<feature type="strand" evidence="7">
    <location>
        <begin position="41"/>
        <end position="43"/>
    </location>
</feature>
<feature type="helix" evidence="7">
    <location>
        <begin position="44"/>
        <end position="52"/>
    </location>
</feature>
<feature type="helix" evidence="7">
    <location>
        <begin position="56"/>
        <end position="68"/>
    </location>
</feature>
<feature type="strand" evidence="7">
    <location>
        <begin position="71"/>
        <end position="79"/>
    </location>
</feature>
<feature type="helix" evidence="7">
    <location>
        <begin position="81"/>
        <end position="84"/>
    </location>
</feature>
<feature type="strand" evidence="7">
    <location>
        <begin position="87"/>
        <end position="93"/>
    </location>
</feature>
<feature type="turn" evidence="7">
    <location>
        <begin position="97"/>
        <end position="99"/>
    </location>
</feature>
<feature type="helix" evidence="7">
    <location>
        <begin position="100"/>
        <end position="108"/>
    </location>
</feature>
<feature type="strand" evidence="7">
    <location>
        <begin position="115"/>
        <end position="123"/>
    </location>
</feature>
<feature type="strand" evidence="7">
    <location>
        <begin position="125"/>
        <end position="132"/>
    </location>
</feature>
<feature type="helix" evidence="7">
    <location>
        <begin position="134"/>
        <end position="148"/>
    </location>
</feature>
<feature type="strand" evidence="6">
    <location>
        <begin position="153"/>
        <end position="155"/>
    </location>
</feature>
<feature type="strand" evidence="7">
    <location>
        <begin position="158"/>
        <end position="161"/>
    </location>
</feature>
<name>AHBA_DESDA</name>
<evidence type="ECO:0000269" key="1">
    <source>
    </source>
</evidence>
<evidence type="ECO:0000305" key="2"/>
<evidence type="ECO:0000312" key="3">
    <source>
        <dbReference type="EMBL" id="ACL48201.1"/>
    </source>
</evidence>
<evidence type="ECO:0007744" key="4">
    <source>
        <dbReference type="PDB" id="4CZD"/>
    </source>
</evidence>
<evidence type="ECO:0007744" key="5">
    <source>
        <dbReference type="PDB" id="4UN1"/>
    </source>
</evidence>
<evidence type="ECO:0007829" key="6">
    <source>
        <dbReference type="PDB" id="4CZD"/>
    </source>
</evidence>
<evidence type="ECO:0007829" key="7">
    <source>
        <dbReference type="PDB" id="4UN1"/>
    </source>
</evidence>
<comment type="function">
    <text evidence="1">Involved in siroheme-dependent heme b biosynthesis. Catalyzes the decarboxylation of siroheme into didecarboxysiroheme (PubMed:24865947). Siroheme is decarboxylated to monodecarboxysiroheme, which is in turn decarboxylated to didecarboxysiroheme (PubMed:24865947).</text>
</comment>
<comment type="catalytic activity">
    <reaction evidence="1">
        <text>siroheme + 2 H(+) = 12,18-didecarboxysiroheme + 2 CO2</text>
        <dbReference type="Rhea" id="RHEA:19093"/>
        <dbReference type="ChEBI" id="CHEBI:15378"/>
        <dbReference type="ChEBI" id="CHEBI:16526"/>
        <dbReference type="ChEBI" id="CHEBI:60052"/>
        <dbReference type="ChEBI" id="CHEBI:140497"/>
        <dbReference type="EC" id="4.1.1.111"/>
    </reaction>
</comment>
<comment type="biophysicochemical properties">
    <kinetics>
        <KM evidence="1">11.74 uM for siroheme</KM>
        <KM evidence="1">9.94 uM for monodecarboxysiroheme</KM>
    </kinetics>
</comment>
<comment type="pathway">
    <text evidence="1">Porphyrin-containing compound metabolism; protoheme biosynthesis.</text>
</comment>
<comment type="subunit">
    <text evidence="1">Forms a heterodimer composed of AhbA and AhbB.</text>
</comment>
<comment type="similarity">
    <text evidence="2">Belongs to the Ahb/Nir family.</text>
</comment>
<sequence>MTTQTSAATGSPTQQNNAALADMDSMDRQLLDIIQTGFPLSPRPYAELGQRLGLDEQEVLDRVRGLKARKIIRRLGANFQSAKLGFVSTLCAAKVPQDKMDAFVAEVNAKPGVTHNYLREHDYNIWFTLISPSREETQAILDGITQATGVPILNLPATKLFKIRVDFRMDNDS</sequence>